<keyword id="KW-1003">Cell membrane</keyword>
<keyword id="KW-0472">Membrane</keyword>
<keyword id="KW-0653">Protein transport</keyword>
<keyword id="KW-1185">Reference proteome</keyword>
<keyword id="KW-0811">Translocation</keyword>
<keyword id="KW-0812">Transmembrane</keyword>
<keyword id="KW-1133">Transmembrane helix</keyword>
<keyword id="KW-0813">Transport</keyword>
<organism>
    <name type="scientific">Streptococcus sanguinis (strain SK36)</name>
    <dbReference type="NCBI Taxonomy" id="388919"/>
    <lineage>
        <taxon>Bacteria</taxon>
        <taxon>Bacillati</taxon>
        <taxon>Bacillota</taxon>
        <taxon>Bacilli</taxon>
        <taxon>Lactobacillales</taxon>
        <taxon>Streptococcaceae</taxon>
        <taxon>Streptococcus</taxon>
    </lineage>
</organism>
<sequence>MFFKLLKDAFKIKQVRSKILFTIFIILVFRIGTTITVPGINAKALSNLNDLPFLNMLSLVSGNAMRNFSVFALGVSPYITASIVVQLLQMDLLPKFVEWGKQGEVGRRKLNQATRYIALVLAFVQAIGITAGFDTLSRANLVANPNVQTYALICVLLATGSMIVTWLGEQITDKGYGNGVSMIIFAGIVSAIPDMIKGIYEDYFVNIPSERLTSSFIFVGILIVAVLLIIYFTTFVQQAEYKIPIQYTKVAKGAPSSSYLPLKVNPAGVIPVIFASSITAAPAAIFQVVSALGYDADWVKTAQSLLATTTISGMFMYAFLIVLFTFFYTFVQINPEKTAENLQKSGAYIPGVRPGKGTEDYMSKLLRRLATVGSLFLGFISILPILAKDVFGLTDAVALGGTSLLIIISTGIEGMKQLEGYLLKRKYVGFMDTSE</sequence>
<protein>
    <recommendedName>
        <fullName evidence="1">Protein translocase subunit SecY</fullName>
    </recommendedName>
</protein>
<evidence type="ECO:0000255" key="1">
    <source>
        <dbReference type="HAMAP-Rule" id="MF_01465"/>
    </source>
</evidence>
<name>SECY_STRSV</name>
<proteinExistence type="inferred from homology"/>
<dbReference type="EMBL" id="CP000387">
    <property type="protein sequence ID" value="ABN43589.1"/>
    <property type="molecule type" value="Genomic_DNA"/>
</dbReference>
<dbReference type="RefSeq" id="WP_002894513.1">
    <property type="nucleotide sequence ID" value="NC_009009.1"/>
</dbReference>
<dbReference type="RefSeq" id="YP_001034139.1">
    <property type="nucleotide sequence ID" value="NC_009009.1"/>
</dbReference>
<dbReference type="SMR" id="A3CK84"/>
<dbReference type="STRING" id="388919.SSA_0127"/>
<dbReference type="GeneID" id="48426565"/>
<dbReference type="KEGG" id="ssa:SSA_0127"/>
<dbReference type="PATRIC" id="fig|388919.9.peg.121"/>
<dbReference type="eggNOG" id="COG0201">
    <property type="taxonomic scope" value="Bacteria"/>
</dbReference>
<dbReference type="HOGENOM" id="CLU_030313_0_1_9"/>
<dbReference type="OrthoDB" id="9809248at2"/>
<dbReference type="Proteomes" id="UP000002148">
    <property type="component" value="Chromosome"/>
</dbReference>
<dbReference type="GO" id="GO:0005886">
    <property type="term" value="C:plasma membrane"/>
    <property type="evidence" value="ECO:0007669"/>
    <property type="project" value="UniProtKB-SubCell"/>
</dbReference>
<dbReference type="GO" id="GO:0065002">
    <property type="term" value="P:intracellular protein transmembrane transport"/>
    <property type="evidence" value="ECO:0007669"/>
    <property type="project" value="UniProtKB-UniRule"/>
</dbReference>
<dbReference type="GO" id="GO:0006605">
    <property type="term" value="P:protein targeting"/>
    <property type="evidence" value="ECO:0007669"/>
    <property type="project" value="UniProtKB-UniRule"/>
</dbReference>
<dbReference type="GO" id="GO:0043952">
    <property type="term" value="P:protein transport by the Sec complex"/>
    <property type="evidence" value="ECO:0007669"/>
    <property type="project" value="UniProtKB-UniRule"/>
</dbReference>
<dbReference type="FunFam" id="1.10.3370.10:FF:000001">
    <property type="entry name" value="Preprotein translocase subunit SecY"/>
    <property type="match status" value="1"/>
</dbReference>
<dbReference type="Gene3D" id="1.10.3370.10">
    <property type="entry name" value="SecY subunit domain"/>
    <property type="match status" value="1"/>
</dbReference>
<dbReference type="HAMAP" id="MF_01465">
    <property type="entry name" value="SecY"/>
    <property type="match status" value="1"/>
</dbReference>
<dbReference type="InterPro" id="IPR026593">
    <property type="entry name" value="SecY"/>
</dbReference>
<dbReference type="InterPro" id="IPR002208">
    <property type="entry name" value="SecY/SEC61-alpha"/>
</dbReference>
<dbReference type="InterPro" id="IPR030659">
    <property type="entry name" value="SecY_CS"/>
</dbReference>
<dbReference type="InterPro" id="IPR023201">
    <property type="entry name" value="SecY_dom_sf"/>
</dbReference>
<dbReference type="NCBIfam" id="TIGR00967">
    <property type="entry name" value="3a0501s007"/>
    <property type="match status" value="1"/>
</dbReference>
<dbReference type="PANTHER" id="PTHR10906">
    <property type="entry name" value="SECY/SEC61-ALPHA FAMILY MEMBER"/>
    <property type="match status" value="1"/>
</dbReference>
<dbReference type="Pfam" id="PF00344">
    <property type="entry name" value="SecY"/>
    <property type="match status" value="1"/>
</dbReference>
<dbReference type="PIRSF" id="PIRSF004557">
    <property type="entry name" value="SecY"/>
    <property type="match status" value="1"/>
</dbReference>
<dbReference type="PRINTS" id="PR00303">
    <property type="entry name" value="SECYTRNLCASE"/>
</dbReference>
<dbReference type="SUPFAM" id="SSF103491">
    <property type="entry name" value="Preprotein translocase SecY subunit"/>
    <property type="match status" value="1"/>
</dbReference>
<dbReference type="PROSITE" id="PS00755">
    <property type="entry name" value="SECY_1"/>
    <property type="match status" value="1"/>
</dbReference>
<feature type="chain" id="PRO_0000414211" description="Protein translocase subunit SecY">
    <location>
        <begin position="1"/>
        <end position="435"/>
    </location>
</feature>
<feature type="transmembrane region" description="Helical" evidence="1">
    <location>
        <begin position="19"/>
        <end position="39"/>
    </location>
</feature>
<feature type="transmembrane region" description="Helical" evidence="1">
    <location>
        <begin position="68"/>
        <end position="88"/>
    </location>
</feature>
<feature type="transmembrane region" description="Helical" evidence="1">
    <location>
        <begin position="116"/>
        <end position="136"/>
    </location>
</feature>
<feature type="transmembrane region" description="Helical" evidence="1">
    <location>
        <begin position="147"/>
        <end position="167"/>
    </location>
</feature>
<feature type="transmembrane region" description="Helical" evidence="1">
    <location>
        <begin position="179"/>
        <end position="199"/>
    </location>
</feature>
<feature type="transmembrane region" description="Helical" evidence="1">
    <location>
        <begin position="216"/>
        <end position="236"/>
    </location>
</feature>
<feature type="transmembrane region" description="Helical" evidence="1">
    <location>
        <begin position="269"/>
        <end position="289"/>
    </location>
</feature>
<feature type="transmembrane region" description="Helical" evidence="1">
    <location>
        <begin position="311"/>
        <end position="331"/>
    </location>
</feature>
<feature type="transmembrane region" description="Helical" evidence="1">
    <location>
        <begin position="372"/>
        <end position="392"/>
    </location>
</feature>
<feature type="transmembrane region" description="Helical" evidence="1">
    <location>
        <begin position="395"/>
        <end position="415"/>
    </location>
</feature>
<comment type="function">
    <text evidence="1">The central subunit of the protein translocation channel SecYEG. Consists of two halves formed by TMs 1-5 and 6-10. These two domains form a lateral gate at the front which open onto the bilayer between TMs 2 and 7, and are clamped together by SecE at the back. The channel is closed by both a pore ring composed of hydrophobic SecY resides and a short helix (helix 2A) on the extracellular side of the membrane which forms a plug. The plug probably moves laterally to allow the channel to open. The ring and the pore may move independently.</text>
</comment>
<comment type="subunit">
    <text evidence="1">Component of the Sec protein translocase complex. Heterotrimer consisting of SecY, SecE and SecG subunits. The heterotrimers can form oligomers, although 1 heterotrimer is thought to be able to translocate proteins. Interacts with the ribosome. Interacts with SecDF, and other proteins may be involved. Interacts with SecA.</text>
</comment>
<comment type="subcellular location">
    <subcellularLocation>
        <location evidence="1">Cell membrane</location>
        <topology evidence="1">Multi-pass membrane protein</topology>
    </subcellularLocation>
</comment>
<comment type="similarity">
    <text evidence="1">Belongs to the SecY/SEC61-alpha family.</text>
</comment>
<reference key="1">
    <citation type="journal article" date="2007" name="J. Bacteriol.">
        <title>Genome of the opportunistic pathogen Streptococcus sanguinis.</title>
        <authorList>
            <person name="Xu P."/>
            <person name="Alves J.M."/>
            <person name="Kitten T."/>
            <person name="Brown A."/>
            <person name="Chen Z."/>
            <person name="Ozaki L.S."/>
            <person name="Manque P."/>
            <person name="Ge X."/>
            <person name="Serrano M.G."/>
            <person name="Puiu D."/>
            <person name="Hendricks S."/>
            <person name="Wang Y."/>
            <person name="Chaplin M.D."/>
            <person name="Akan D."/>
            <person name="Paik S."/>
            <person name="Peterson D.L."/>
            <person name="Macrina F.L."/>
            <person name="Buck G.A."/>
        </authorList>
    </citation>
    <scope>NUCLEOTIDE SEQUENCE [LARGE SCALE GENOMIC DNA]</scope>
    <source>
        <strain>SK36</strain>
    </source>
</reference>
<gene>
    <name evidence="1" type="primary">secY</name>
    <name type="ordered locus">SSA_0127</name>
</gene>
<accession>A3CK84</accession>